<accession>B2VGN7</accession>
<protein>
    <recommendedName>
        <fullName evidence="1">Polyribonucleotide nucleotidyltransferase</fullName>
        <ecNumber evidence="1">2.7.7.8</ecNumber>
    </recommendedName>
    <alternativeName>
        <fullName evidence="1">Polynucleotide phosphorylase</fullName>
        <shortName evidence="1">PNPase</shortName>
    </alternativeName>
</protein>
<feature type="chain" id="PRO_1000147919" description="Polyribonucleotide nucleotidyltransferase">
    <location>
        <begin position="1"/>
        <end position="710"/>
    </location>
</feature>
<feature type="domain" description="KH" evidence="1">
    <location>
        <begin position="553"/>
        <end position="612"/>
    </location>
</feature>
<feature type="domain" description="S1 motif" evidence="1">
    <location>
        <begin position="622"/>
        <end position="690"/>
    </location>
</feature>
<feature type="region of interest" description="Disordered" evidence="2">
    <location>
        <begin position="690"/>
        <end position="710"/>
    </location>
</feature>
<feature type="compositionally biased region" description="Low complexity" evidence="2">
    <location>
        <begin position="694"/>
        <end position="710"/>
    </location>
</feature>
<feature type="binding site" evidence="1">
    <location>
        <position position="486"/>
    </location>
    <ligand>
        <name>Mg(2+)</name>
        <dbReference type="ChEBI" id="CHEBI:18420"/>
    </ligand>
</feature>
<feature type="binding site" evidence="1">
    <location>
        <position position="492"/>
    </location>
    <ligand>
        <name>Mg(2+)</name>
        <dbReference type="ChEBI" id="CHEBI:18420"/>
    </ligand>
</feature>
<gene>
    <name evidence="1" type="primary">pnp</name>
    <name type="ordered locus">ETA_03510</name>
</gene>
<sequence>MLNPIVQKFQYGQHTVTLETGMMARQATAAVMVSMDDTAVFVTVVGQKKAKPGQGFFPLTVNYQERTYAAGRIPGSFFRREGRPSEGETLTSRLIDRPIRPLFPEGFVNEVQVIATVVSVNPQVNPDIVAMIGASAALALSGLPFNGPIGAARVGYLNDQYVLNPTSDELKESKLDLVVAGTKGAVLMVESEAELLSEDQMLGAVVFGHDQQQIVIDNINALVAEAGKPRWDWQPEAVNEALRSRITALAESRLSDAYRITEKQERYAQVDVIKSETSAALLAEDEALDAAEISDLLHALEKDVVRSRILRGEPRIDGREKDMIRGLDVRTGVLPRTHGSALFTRGETQALVTATLGTARDAQNLDELMGERTDNFLFHYNFPPYSVGETGMVGSPKRREIGHGRLAKRGVLAVMPKGDAFPYTVRVVSEITESNGSSSMASVCGASLALMDAGVPIKAAVAGIAMGLVKDENNFVVLSDILGDEDHLGDMDFKVAGSREGITALQMDIKIEGITREIMQVALNQAKGARLHILGVMEQAISGPRGDISQFAPRIHTIKISVDKIKDVIGKGGSVIRALTEETGTTIEIEDDGTVKIAATDGDKAKFAIRRIEEITAEIEVGRIYNGKVTRIVDFGAFVAIGGGKEGLVHISQIADKRVEKVTDYLQMGQEVPVKVLEVDRQGRVRLSIKEAGEQAQPEAEAVPAAPEAE</sequence>
<name>PNP_ERWT9</name>
<comment type="function">
    <text evidence="1">Involved in mRNA degradation. Catalyzes the phosphorolysis of single-stranded polyribonucleotides processively in the 3'- to 5'-direction.</text>
</comment>
<comment type="catalytic activity">
    <reaction evidence="1">
        <text>RNA(n+1) + phosphate = RNA(n) + a ribonucleoside 5'-diphosphate</text>
        <dbReference type="Rhea" id="RHEA:22096"/>
        <dbReference type="Rhea" id="RHEA-COMP:14527"/>
        <dbReference type="Rhea" id="RHEA-COMP:17342"/>
        <dbReference type="ChEBI" id="CHEBI:43474"/>
        <dbReference type="ChEBI" id="CHEBI:57930"/>
        <dbReference type="ChEBI" id="CHEBI:140395"/>
        <dbReference type="EC" id="2.7.7.8"/>
    </reaction>
</comment>
<comment type="cofactor">
    <cofactor evidence="1">
        <name>Mg(2+)</name>
        <dbReference type="ChEBI" id="CHEBI:18420"/>
    </cofactor>
</comment>
<comment type="subunit">
    <text evidence="1">Component of the RNA degradosome, which is a multiprotein complex involved in RNA processing and mRNA degradation.</text>
</comment>
<comment type="subcellular location">
    <subcellularLocation>
        <location evidence="1">Cytoplasm</location>
    </subcellularLocation>
</comment>
<comment type="similarity">
    <text evidence="1">Belongs to the polyribonucleotide nucleotidyltransferase family.</text>
</comment>
<reference key="1">
    <citation type="journal article" date="2008" name="Environ. Microbiol.">
        <title>The genome of Erwinia tasmaniensis strain Et1/99, a non-pathogenic bacterium in the genus Erwinia.</title>
        <authorList>
            <person name="Kube M."/>
            <person name="Migdoll A.M."/>
            <person name="Mueller I."/>
            <person name="Kuhl H."/>
            <person name="Beck A."/>
            <person name="Reinhardt R."/>
            <person name="Geider K."/>
        </authorList>
    </citation>
    <scope>NUCLEOTIDE SEQUENCE [LARGE SCALE GENOMIC DNA]</scope>
    <source>
        <strain>DSM 17950 / CFBP 7177 / CIP 109463 / NCPPB 4357 / Et1/99</strain>
    </source>
</reference>
<organism>
    <name type="scientific">Erwinia tasmaniensis (strain DSM 17950 / CFBP 7177 / CIP 109463 / NCPPB 4357 / Et1/99)</name>
    <dbReference type="NCBI Taxonomy" id="465817"/>
    <lineage>
        <taxon>Bacteria</taxon>
        <taxon>Pseudomonadati</taxon>
        <taxon>Pseudomonadota</taxon>
        <taxon>Gammaproteobacteria</taxon>
        <taxon>Enterobacterales</taxon>
        <taxon>Erwiniaceae</taxon>
        <taxon>Erwinia</taxon>
    </lineage>
</organism>
<evidence type="ECO:0000255" key="1">
    <source>
        <dbReference type="HAMAP-Rule" id="MF_01595"/>
    </source>
</evidence>
<evidence type="ECO:0000256" key="2">
    <source>
        <dbReference type="SAM" id="MobiDB-lite"/>
    </source>
</evidence>
<dbReference type="EC" id="2.7.7.8" evidence="1"/>
<dbReference type="EMBL" id="CU468135">
    <property type="protein sequence ID" value="CAO95397.1"/>
    <property type="molecule type" value="Genomic_DNA"/>
</dbReference>
<dbReference type="RefSeq" id="WP_012440112.1">
    <property type="nucleotide sequence ID" value="NC_010694.1"/>
</dbReference>
<dbReference type="SMR" id="B2VGN7"/>
<dbReference type="STRING" id="465817.ETA_03510"/>
<dbReference type="KEGG" id="eta:ETA_03510"/>
<dbReference type="eggNOG" id="COG1185">
    <property type="taxonomic scope" value="Bacteria"/>
</dbReference>
<dbReference type="HOGENOM" id="CLU_004217_2_2_6"/>
<dbReference type="OrthoDB" id="9804305at2"/>
<dbReference type="Proteomes" id="UP000001726">
    <property type="component" value="Chromosome"/>
</dbReference>
<dbReference type="GO" id="GO:0005829">
    <property type="term" value="C:cytosol"/>
    <property type="evidence" value="ECO:0007669"/>
    <property type="project" value="TreeGrafter"/>
</dbReference>
<dbReference type="GO" id="GO:0000175">
    <property type="term" value="F:3'-5'-RNA exonuclease activity"/>
    <property type="evidence" value="ECO:0007669"/>
    <property type="project" value="TreeGrafter"/>
</dbReference>
<dbReference type="GO" id="GO:0000287">
    <property type="term" value="F:magnesium ion binding"/>
    <property type="evidence" value="ECO:0007669"/>
    <property type="project" value="UniProtKB-UniRule"/>
</dbReference>
<dbReference type="GO" id="GO:0004654">
    <property type="term" value="F:polyribonucleotide nucleotidyltransferase activity"/>
    <property type="evidence" value="ECO:0007669"/>
    <property type="project" value="UniProtKB-UniRule"/>
</dbReference>
<dbReference type="GO" id="GO:0003723">
    <property type="term" value="F:RNA binding"/>
    <property type="evidence" value="ECO:0007669"/>
    <property type="project" value="UniProtKB-UniRule"/>
</dbReference>
<dbReference type="GO" id="GO:0006402">
    <property type="term" value="P:mRNA catabolic process"/>
    <property type="evidence" value="ECO:0007669"/>
    <property type="project" value="UniProtKB-UniRule"/>
</dbReference>
<dbReference type="GO" id="GO:0006396">
    <property type="term" value="P:RNA processing"/>
    <property type="evidence" value="ECO:0007669"/>
    <property type="project" value="InterPro"/>
</dbReference>
<dbReference type="CDD" id="cd02393">
    <property type="entry name" value="KH-I_PNPase"/>
    <property type="match status" value="1"/>
</dbReference>
<dbReference type="CDD" id="cd11363">
    <property type="entry name" value="RNase_PH_PNPase_1"/>
    <property type="match status" value="1"/>
</dbReference>
<dbReference type="CDD" id="cd11364">
    <property type="entry name" value="RNase_PH_PNPase_2"/>
    <property type="match status" value="1"/>
</dbReference>
<dbReference type="CDD" id="cd04472">
    <property type="entry name" value="S1_PNPase"/>
    <property type="match status" value="1"/>
</dbReference>
<dbReference type="FunFam" id="2.40.50.140:FF:000023">
    <property type="entry name" value="Polyribonucleotide nucleotidyltransferase"/>
    <property type="match status" value="1"/>
</dbReference>
<dbReference type="FunFam" id="3.30.1370.10:FF:000001">
    <property type="entry name" value="Polyribonucleotide nucleotidyltransferase"/>
    <property type="match status" value="1"/>
</dbReference>
<dbReference type="FunFam" id="3.30.230.70:FF:000001">
    <property type="entry name" value="Polyribonucleotide nucleotidyltransferase"/>
    <property type="match status" value="1"/>
</dbReference>
<dbReference type="FunFam" id="3.30.230.70:FF:000002">
    <property type="entry name" value="Polyribonucleotide nucleotidyltransferase"/>
    <property type="match status" value="1"/>
</dbReference>
<dbReference type="Gene3D" id="3.30.230.70">
    <property type="entry name" value="GHMP Kinase, N-terminal domain"/>
    <property type="match status" value="2"/>
</dbReference>
<dbReference type="Gene3D" id="3.30.1370.10">
    <property type="entry name" value="K Homology domain, type 1"/>
    <property type="match status" value="1"/>
</dbReference>
<dbReference type="Gene3D" id="2.40.50.140">
    <property type="entry name" value="Nucleic acid-binding proteins"/>
    <property type="match status" value="1"/>
</dbReference>
<dbReference type="HAMAP" id="MF_01595">
    <property type="entry name" value="PNPase"/>
    <property type="match status" value="1"/>
</dbReference>
<dbReference type="InterPro" id="IPR001247">
    <property type="entry name" value="ExoRNase_PH_dom1"/>
</dbReference>
<dbReference type="InterPro" id="IPR015847">
    <property type="entry name" value="ExoRNase_PH_dom2"/>
</dbReference>
<dbReference type="InterPro" id="IPR036345">
    <property type="entry name" value="ExoRNase_PH_dom2_sf"/>
</dbReference>
<dbReference type="InterPro" id="IPR004087">
    <property type="entry name" value="KH_dom"/>
</dbReference>
<dbReference type="InterPro" id="IPR004088">
    <property type="entry name" value="KH_dom_type_1"/>
</dbReference>
<dbReference type="InterPro" id="IPR036612">
    <property type="entry name" value="KH_dom_type_1_sf"/>
</dbReference>
<dbReference type="InterPro" id="IPR012340">
    <property type="entry name" value="NA-bd_OB-fold"/>
</dbReference>
<dbReference type="InterPro" id="IPR012162">
    <property type="entry name" value="PNPase"/>
</dbReference>
<dbReference type="InterPro" id="IPR027408">
    <property type="entry name" value="PNPase/RNase_PH_dom_sf"/>
</dbReference>
<dbReference type="InterPro" id="IPR015848">
    <property type="entry name" value="PNPase_PH_RNA-bd_bac/org-type"/>
</dbReference>
<dbReference type="InterPro" id="IPR036456">
    <property type="entry name" value="PNPase_PH_RNA-bd_sf"/>
</dbReference>
<dbReference type="InterPro" id="IPR020568">
    <property type="entry name" value="Ribosomal_Su5_D2-typ_SF"/>
</dbReference>
<dbReference type="InterPro" id="IPR003029">
    <property type="entry name" value="S1_domain"/>
</dbReference>
<dbReference type="NCBIfam" id="TIGR03591">
    <property type="entry name" value="polynuc_phos"/>
    <property type="match status" value="1"/>
</dbReference>
<dbReference type="NCBIfam" id="NF008805">
    <property type="entry name" value="PRK11824.1"/>
    <property type="match status" value="1"/>
</dbReference>
<dbReference type="PANTHER" id="PTHR11252">
    <property type="entry name" value="POLYRIBONUCLEOTIDE NUCLEOTIDYLTRANSFERASE"/>
    <property type="match status" value="1"/>
</dbReference>
<dbReference type="PANTHER" id="PTHR11252:SF0">
    <property type="entry name" value="POLYRIBONUCLEOTIDE NUCLEOTIDYLTRANSFERASE 1, MITOCHONDRIAL"/>
    <property type="match status" value="1"/>
</dbReference>
<dbReference type="Pfam" id="PF00013">
    <property type="entry name" value="KH_1"/>
    <property type="match status" value="1"/>
</dbReference>
<dbReference type="Pfam" id="PF03726">
    <property type="entry name" value="PNPase"/>
    <property type="match status" value="1"/>
</dbReference>
<dbReference type="Pfam" id="PF01138">
    <property type="entry name" value="RNase_PH"/>
    <property type="match status" value="2"/>
</dbReference>
<dbReference type="Pfam" id="PF03725">
    <property type="entry name" value="RNase_PH_C"/>
    <property type="match status" value="2"/>
</dbReference>
<dbReference type="Pfam" id="PF00575">
    <property type="entry name" value="S1"/>
    <property type="match status" value="1"/>
</dbReference>
<dbReference type="PIRSF" id="PIRSF005499">
    <property type="entry name" value="PNPase"/>
    <property type="match status" value="1"/>
</dbReference>
<dbReference type="SMART" id="SM00322">
    <property type="entry name" value="KH"/>
    <property type="match status" value="1"/>
</dbReference>
<dbReference type="SMART" id="SM00316">
    <property type="entry name" value="S1"/>
    <property type="match status" value="1"/>
</dbReference>
<dbReference type="SUPFAM" id="SSF54791">
    <property type="entry name" value="Eukaryotic type KH-domain (KH-domain type I)"/>
    <property type="match status" value="1"/>
</dbReference>
<dbReference type="SUPFAM" id="SSF50249">
    <property type="entry name" value="Nucleic acid-binding proteins"/>
    <property type="match status" value="1"/>
</dbReference>
<dbReference type="SUPFAM" id="SSF46915">
    <property type="entry name" value="Polynucleotide phosphorylase/guanosine pentaphosphate synthase (PNPase/GPSI), domain 3"/>
    <property type="match status" value="1"/>
</dbReference>
<dbReference type="SUPFAM" id="SSF55666">
    <property type="entry name" value="Ribonuclease PH domain 2-like"/>
    <property type="match status" value="2"/>
</dbReference>
<dbReference type="SUPFAM" id="SSF54211">
    <property type="entry name" value="Ribosomal protein S5 domain 2-like"/>
    <property type="match status" value="2"/>
</dbReference>
<dbReference type="PROSITE" id="PS50084">
    <property type="entry name" value="KH_TYPE_1"/>
    <property type="match status" value="1"/>
</dbReference>
<dbReference type="PROSITE" id="PS50126">
    <property type="entry name" value="S1"/>
    <property type="match status" value="1"/>
</dbReference>
<keyword id="KW-0963">Cytoplasm</keyword>
<keyword id="KW-0460">Magnesium</keyword>
<keyword id="KW-0479">Metal-binding</keyword>
<keyword id="KW-0548">Nucleotidyltransferase</keyword>
<keyword id="KW-1185">Reference proteome</keyword>
<keyword id="KW-0694">RNA-binding</keyword>
<keyword id="KW-0808">Transferase</keyword>
<proteinExistence type="inferred from homology"/>